<name>RECO_SALDC</name>
<accession>B5FRC3</accession>
<comment type="function">
    <text evidence="1">Involved in DNA repair and RecF pathway recombination.</text>
</comment>
<comment type="subunit">
    <text evidence="1">Monomer.</text>
</comment>
<comment type="similarity">
    <text evidence="1">Belongs to the RecO family.</text>
</comment>
<sequence length="242" mass="27588">MEGWQRAFVLHSRPWSETSLMLDVFTEESGRVRLVAKGARSKRSNLKGVLQPFTPLLLRYSGRGEVKTLRSAEAVSLALPLSGITLYSGLYINELLSRVLEYETRFSELFFDYLNCIQALAGTTGSPEPALRRFELALLGHLGYGVNFTHCAGSGERVDDTMTYRYREEKGFFASVVIDNNTFTGRHLKALEEREFPDVDTLRAAKRFTRMALKPYLGGKPLKSRELFRQFMPKRTVKMKKD</sequence>
<keyword id="KW-0227">DNA damage</keyword>
<keyword id="KW-0233">DNA recombination</keyword>
<keyword id="KW-0234">DNA repair</keyword>
<dbReference type="EMBL" id="CP001144">
    <property type="protein sequence ID" value="ACH77412.1"/>
    <property type="molecule type" value="Genomic_DNA"/>
</dbReference>
<dbReference type="RefSeq" id="WP_000399387.1">
    <property type="nucleotide sequence ID" value="NC_011205.1"/>
</dbReference>
<dbReference type="SMR" id="B5FRC3"/>
<dbReference type="KEGG" id="sed:SeD_A2957"/>
<dbReference type="HOGENOM" id="CLU_066645_1_0_6"/>
<dbReference type="Proteomes" id="UP000008322">
    <property type="component" value="Chromosome"/>
</dbReference>
<dbReference type="GO" id="GO:0043590">
    <property type="term" value="C:bacterial nucleoid"/>
    <property type="evidence" value="ECO:0007669"/>
    <property type="project" value="TreeGrafter"/>
</dbReference>
<dbReference type="GO" id="GO:0006310">
    <property type="term" value="P:DNA recombination"/>
    <property type="evidence" value="ECO:0007669"/>
    <property type="project" value="UniProtKB-UniRule"/>
</dbReference>
<dbReference type="GO" id="GO:0006302">
    <property type="term" value="P:double-strand break repair"/>
    <property type="evidence" value="ECO:0007669"/>
    <property type="project" value="TreeGrafter"/>
</dbReference>
<dbReference type="FunFam" id="1.20.1440.120:FF:000001">
    <property type="entry name" value="DNA repair protein RecO"/>
    <property type="match status" value="1"/>
</dbReference>
<dbReference type="FunFam" id="2.40.50.140:FF:000074">
    <property type="entry name" value="DNA repair protein RecO"/>
    <property type="match status" value="1"/>
</dbReference>
<dbReference type="Gene3D" id="2.40.50.140">
    <property type="entry name" value="Nucleic acid-binding proteins"/>
    <property type="match status" value="1"/>
</dbReference>
<dbReference type="Gene3D" id="1.20.1440.120">
    <property type="entry name" value="Recombination protein O, C-terminal domain"/>
    <property type="match status" value="1"/>
</dbReference>
<dbReference type="HAMAP" id="MF_00201">
    <property type="entry name" value="RecO"/>
    <property type="match status" value="1"/>
</dbReference>
<dbReference type="InterPro" id="IPR037278">
    <property type="entry name" value="ARFGAP/RecO"/>
</dbReference>
<dbReference type="InterPro" id="IPR022572">
    <property type="entry name" value="DNA_rep/recomb_RecO_N"/>
</dbReference>
<dbReference type="InterPro" id="IPR012340">
    <property type="entry name" value="NA-bd_OB-fold"/>
</dbReference>
<dbReference type="InterPro" id="IPR003717">
    <property type="entry name" value="RecO"/>
</dbReference>
<dbReference type="InterPro" id="IPR042242">
    <property type="entry name" value="RecO_C"/>
</dbReference>
<dbReference type="NCBIfam" id="TIGR00613">
    <property type="entry name" value="reco"/>
    <property type="match status" value="1"/>
</dbReference>
<dbReference type="PANTHER" id="PTHR33991">
    <property type="entry name" value="DNA REPAIR PROTEIN RECO"/>
    <property type="match status" value="1"/>
</dbReference>
<dbReference type="PANTHER" id="PTHR33991:SF1">
    <property type="entry name" value="DNA REPAIR PROTEIN RECO"/>
    <property type="match status" value="1"/>
</dbReference>
<dbReference type="Pfam" id="PF02565">
    <property type="entry name" value="RecO_C"/>
    <property type="match status" value="1"/>
</dbReference>
<dbReference type="Pfam" id="PF11967">
    <property type="entry name" value="RecO_N"/>
    <property type="match status" value="1"/>
</dbReference>
<dbReference type="SUPFAM" id="SSF57863">
    <property type="entry name" value="ArfGap/RecO-like zinc finger"/>
    <property type="match status" value="1"/>
</dbReference>
<dbReference type="SUPFAM" id="SSF50249">
    <property type="entry name" value="Nucleic acid-binding proteins"/>
    <property type="match status" value="1"/>
</dbReference>
<feature type="chain" id="PRO_1000099405" description="DNA repair protein RecO">
    <location>
        <begin position="1"/>
        <end position="242"/>
    </location>
</feature>
<reference key="1">
    <citation type="journal article" date="2011" name="J. Bacteriol.">
        <title>Comparative genomics of 28 Salmonella enterica isolates: evidence for CRISPR-mediated adaptive sublineage evolution.</title>
        <authorList>
            <person name="Fricke W.F."/>
            <person name="Mammel M.K."/>
            <person name="McDermott P.F."/>
            <person name="Tartera C."/>
            <person name="White D.G."/>
            <person name="Leclerc J.E."/>
            <person name="Ravel J."/>
            <person name="Cebula T.A."/>
        </authorList>
    </citation>
    <scope>NUCLEOTIDE SEQUENCE [LARGE SCALE GENOMIC DNA]</scope>
    <source>
        <strain>CT_02021853</strain>
    </source>
</reference>
<evidence type="ECO:0000255" key="1">
    <source>
        <dbReference type="HAMAP-Rule" id="MF_00201"/>
    </source>
</evidence>
<gene>
    <name evidence="1" type="primary">recO</name>
    <name type="ordered locus">SeD_A2957</name>
</gene>
<organism>
    <name type="scientific">Salmonella dublin (strain CT_02021853)</name>
    <dbReference type="NCBI Taxonomy" id="439851"/>
    <lineage>
        <taxon>Bacteria</taxon>
        <taxon>Pseudomonadati</taxon>
        <taxon>Pseudomonadota</taxon>
        <taxon>Gammaproteobacteria</taxon>
        <taxon>Enterobacterales</taxon>
        <taxon>Enterobacteriaceae</taxon>
        <taxon>Salmonella</taxon>
    </lineage>
</organism>
<protein>
    <recommendedName>
        <fullName evidence="1">DNA repair protein RecO</fullName>
    </recommendedName>
    <alternativeName>
        <fullName evidence="1">Recombination protein O</fullName>
    </alternativeName>
</protein>
<proteinExistence type="inferred from homology"/>